<evidence type="ECO:0000255" key="1"/>
<evidence type="ECO:0000256" key="2">
    <source>
        <dbReference type="SAM" id="MobiDB-lite"/>
    </source>
</evidence>
<evidence type="ECO:0000305" key="3"/>
<accession>P9WL84</accession>
<accession>L0TA92</accession>
<accession>P65019</accession>
<accession>Q50646</accession>
<feature type="chain" id="PRO_0000427523" description="Uncharacterized protein MT2651">
    <location>
        <begin position="1"/>
        <end position="293"/>
    </location>
</feature>
<feature type="transmembrane region" description="Helical" evidence="1">
    <location>
        <begin position="25"/>
        <end position="45"/>
    </location>
</feature>
<feature type="region of interest" description="Disordered" evidence="2">
    <location>
        <begin position="1"/>
        <end position="22"/>
    </location>
</feature>
<feature type="region of interest" description="Disordered" evidence="2">
    <location>
        <begin position="243"/>
        <end position="265"/>
    </location>
</feature>
<feature type="compositionally biased region" description="Polar residues" evidence="2">
    <location>
        <begin position="248"/>
        <end position="265"/>
    </location>
</feature>
<reference key="1">
    <citation type="journal article" date="2002" name="J. Bacteriol.">
        <title>Whole-genome comparison of Mycobacterium tuberculosis clinical and laboratory strains.</title>
        <authorList>
            <person name="Fleischmann R.D."/>
            <person name="Alland D."/>
            <person name="Eisen J.A."/>
            <person name="Carpenter L."/>
            <person name="White O."/>
            <person name="Peterson J.D."/>
            <person name="DeBoy R.T."/>
            <person name="Dodson R.J."/>
            <person name="Gwinn M.L."/>
            <person name="Haft D.H."/>
            <person name="Hickey E.K."/>
            <person name="Kolonay J.F."/>
            <person name="Nelson W.C."/>
            <person name="Umayam L.A."/>
            <person name="Ermolaeva M.D."/>
            <person name="Salzberg S.L."/>
            <person name="Delcher A."/>
            <person name="Utterback T.R."/>
            <person name="Weidman J.F."/>
            <person name="Khouri H.M."/>
            <person name="Gill J."/>
            <person name="Mikula A."/>
            <person name="Bishai W."/>
            <person name="Jacobs W.R. Jr."/>
            <person name="Venter J.C."/>
            <person name="Fraser C.M."/>
        </authorList>
    </citation>
    <scope>NUCLEOTIDE SEQUENCE [LARGE SCALE GENOMIC DNA]</scope>
    <source>
        <strain>CDC 1551 / Oshkosh</strain>
    </source>
</reference>
<organism>
    <name type="scientific">Mycobacterium tuberculosis (strain CDC 1551 / Oshkosh)</name>
    <dbReference type="NCBI Taxonomy" id="83331"/>
    <lineage>
        <taxon>Bacteria</taxon>
        <taxon>Bacillati</taxon>
        <taxon>Actinomycetota</taxon>
        <taxon>Actinomycetes</taxon>
        <taxon>Mycobacteriales</taxon>
        <taxon>Mycobacteriaceae</taxon>
        <taxon>Mycobacterium</taxon>
        <taxon>Mycobacterium tuberculosis complex</taxon>
    </lineage>
</organism>
<sequence>MTFNEGVQIDTSTTSTSGSGGGRRLAIGGGLGGLLVVVVAMLLGVDPGGVLSQQPLDTRDHVAPGFDLSQCRTGADANRFVQCRVVATGNSVDAVWKPLLPGYTRPHMRLFSGQVGTGCGPASSEVGPFYCPVDKTAYFDTDFFQVLVTQFGSSGGPFAEEYVVAHEYGHHVQNLLGVLGRAQQGAQGAAGSGVRTELQADCYAGVWAYYASTVKQESTGVPYLEPLSDKDIQDALAAAAAVGDDRIQQQTTGRTNPETWTHGSAAQRQKWFTVGYQTGDPNICDTFSAADLG</sequence>
<keyword id="KW-0472">Membrane</keyword>
<keyword id="KW-1185">Reference proteome</keyword>
<keyword id="KW-0812">Transmembrane</keyword>
<keyword id="KW-1133">Transmembrane helix</keyword>
<comment type="subcellular location">
    <subcellularLocation>
        <location evidence="3">Membrane</location>
        <topology evidence="3">Single-pass membrane protein</topology>
    </subcellularLocation>
</comment>
<gene>
    <name type="ordered locus">MT2651</name>
</gene>
<proteinExistence type="predicted"/>
<dbReference type="EMBL" id="AE000516">
    <property type="protein sequence ID" value="AAK46964.1"/>
    <property type="molecule type" value="Genomic_DNA"/>
</dbReference>
<dbReference type="PIR" id="F70724">
    <property type="entry name" value="F70724"/>
</dbReference>
<dbReference type="RefSeq" id="WP_003899384.1">
    <property type="nucleotide sequence ID" value="NZ_KK341227.1"/>
</dbReference>
<dbReference type="KEGG" id="mtc:MT2651"/>
<dbReference type="PATRIC" id="fig|83331.31.peg.2858"/>
<dbReference type="HOGENOM" id="CLU_059329_1_0_11"/>
<dbReference type="Proteomes" id="UP000001020">
    <property type="component" value="Chromosome"/>
</dbReference>
<dbReference type="GO" id="GO:0016020">
    <property type="term" value="C:membrane"/>
    <property type="evidence" value="ECO:0007669"/>
    <property type="project" value="UniProtKB-SubCell"/>
</dbReference>
<dbReference type="InterPro" id="IPR007343">
    <property type="entry name" value="Uncharacterised_pept_Zn_put"/>
</dbReference>
<dbReference type="PANTHER" id="PTHR30168:SF0">
    <property type="entry name" value="INNER MEMBRANE PROTEIN"/>
    <property type="match status" value="1"/>
</dbReference>
<dbReference type="PANTHER" id="PTHR30168">
    <property type="entry name" value="PUTATIVE MEMBRANE PROTEIN YPFJ"/>
    <property type="match status" value="1"/>
</dbReference>
<dbReference type="Pfam" id="PF04228">
    <property type="entry name" value="Zn_peptidase"/>
    <property type="match status" value="1"/>
</dbReference>
<dbReference type="SUPFAM" id="SSF55486">
    <property type="entry name" value="Metalloproteases ('zincins'), catalytic domain"/>
    <property type="match status" value="1"/>
</dbReference>
<protein>
    <recommendedName>
        <fullName>Uncharacterized protein MT2651</fullName>
    </recommendedName>
</protein>
<name>Y2575_MYCTO</name>